<sequence length="214" mass="24307">MTLQPTFEGRTPEQCLNVHTDSHPDITGCQAALFEWAESYDSKDWDRLKQCIAPFLRIDYRAFLDKLWEKMPAEEFVAMVSHPHFLGNPLLKTQHFVGTMKWEKVDDSKIVGYHQMRVAHQKHLDSQMKEVVAKGHGHGSATVTYRKINGEWKFAGIEPNIRWTEFGGEGIFGPPEKEENGVAADDQVMNSNGSSEVEERNGHVVNKAVEVRSV</sequence>
<accession>C8VQ71</accession>
<accession>Q5BH35</accession>
<reference key="1">
    <citation type="journal article" date="2005" name="Nature">
        <title>Sequencing of Aspergillus nidulans and comparative analysis with A. fumigatus and A. oryzae.</title>
        <authorList>
            <person name="Galagan J.E."/>
            <person name="Calvo S.E."/>
            <person name="Cuomo C."/>
            <person name="Ma L.-J."/>
            <person name="Wortman J.R."/>
            <person name="Batzoglou S."/>
            <person name="Lee S.-I."/>
            <person name="Bastuerkmen M."/>
            <person name="Spevak C.C."/>
            <person name="Clutterbuck J."/>
            <person name="Kapitonov V."/>
            <person name="Jurka J."/>
            <person name="Scazzocchio C."/>
            <person name="Farman M.L."/>
            <person name="Butler J."/>
            <person name="Purcell S."/>
            <person name="Harris S."/>
            <person name="Braus G.H."/>
            <person name="Draht O."/>
            <person name="Busch S."/>
            <person name="D'Enfert C."/>
            <person name="Bouchier C."/>
            <person name="Goldman G.H."/>
            <person name="Bell-Pedersen D."/>
            <person name="Griffiths-Jones S."/>
            <person name="Doonan J.H."/>
            <person name="Yu J."/>
            <person name="Vienken K."/>
            <person name="Pain A."/>
            <person name="Freitag M."/>
            <person name="Selker E.U."/>
            <person name="Archer D.B."/>
            <person name="Penalva M.A."/>
            <person name="Oakley B.R."/>
            <person name="Momany M."/>
            <person name="Tanaka T."/>
            <person name="Kumagai T."/>
            <person name="Asai K."/>
            <person name="Machida M."/>
            <person name="Nierman W.C."/>
            <person name="Denning D.W."/>
            <person name="Caddick M.X."/>
            <person name="Hynes M."/>
            <person name="Paoletti M."/>
            <person name="Fischer R."/>
            <person name="Miller B.L."/>
            <person name="Dyer P.S."/>
            <person name="Sachs M.S."/>
            <person name="Osmani S.A."/>
            <person name="Birren B.W."/>
        </authorList>
    </citation>
    <scope>NUCLEOTIDE SEQUENCE [LARGE SCALE GENOMIC DNA]</scope>
    <source>
        <strain>FGSC A4 / ATCC 38163 / CBS 112.46 / NRRL 194 / M139</strain>
    </source>
</reference>
<reference key="2">
    <citation type="journal article" date="2009" name="Fungal Genet. Biol.">
        <title>The 2008 update of the Aspergillus nidulans genome annotation: a community effort.</title>
        <authorList>
            <person name="Wortman J.R."/>
            <person name="Gilsenan J.M."/>
            <person name="Joardar V."/>
            <person name="Deegan J."/>
            <person name="Clutterbuck J."/>
            <person name="Andersen M.R."/>
            <person name="Archer D."/>
            <person name="Bencina M."/>
            <person name="Braus G."/>
            <person name="Coutinho P."/>
            <person name="von Dohren H."/>
            <person name="Doonan J."/>
            <person name="Driessen A.J."/>
            <person name="Durek P."/>
            <person name="Espeso E."/>
            <person name="Fekete E."/>
            <person name="Flipphi M."/>
            <person name="Estrada C.G."/>
            <person name="Geysens S."/>
            <person name="Goldman G."/>
            <person name="de Groot P.W."/>
            <person name="Hansen K."/>
            <person name="Harris S.D."/>
            <person name="Heinekamp T."/>
            <person name="Helmstaedt K."/>
            <person name="Henrissat B."/>
            <person name="Hofmann G."/>
            <person name="Homan T."/>
            <person name="Horio T."/>
            <person name="Horiuchi H."/>
            <person name="James S."/>
            <person name="Jones M."/>
            <person name="Karaffa L."/>
            <person name="Karanyi Z."/>
            <person name="Kato M."/>
            <person name="Keller N."/>
            <person name="Kelly D.E."/>
            <person name="Kiel J.A."/>
            <person name="Kim J.M."/>
            <person name="van der Klei I.J."/>
            <person name="Klis F.M."/>
            <person name="Kovalchuk A."/>
            <person name="Krasevec N."/>
            <person name="Kubicek C.P."/>
            <person name="Liu B."/>
            <person name="Maccabe A."/>
            <person name="Meyer V."/>
            <person name="Mirabito P."/>
            <person name="Miskei M."/>
            <person name="Mos M."/>
            <person name="Mullins J."/>
            <person name="Nelson D.R."/>
            <person name="Nielsen J."/>
            <person name="Oakley B.R."/>
            <person name="Osmani S.A."/>
            <person name="Pakula T."/>
            <person name="Paszewski A."/>
            <person name="Paulsen I."/>
            <person name="Pilsyk S."/>
            <person name="Pocsi I."/>
            <person name="Punt P.J."/>
            <person name="Ram A.F."/>
            <person name="Ren Q."/>
            <person name="Robellet X."/>
            <person name="Robson G."/>
            <person name="Seiboth B."/>
            <person name="van Solingen P."/>
            <person name="Specht T."/>
            <person name="Sun J."/>
            <person name="Taheri-Talesh N."/>
            <person name="Takeshita N."/>
            <person name="Ussery D."/>
            <person name="vanKuyk P.A."/>
            <person name="Visser H."/>
            <person name="van de Vondervoort P.J."/>
            <person name="de Vries R.P."/>
            <person name="Walton J."/>
            <person name="Xiang X."/>
            <person name="Xiong Y."/>
            <person name="Zeng A.P."/>
            <person name="Brandt B.W."/>
            <person name="Cornell M.J."/>
            <person name="van den Hondel C.A."/>
            <person name="Visser J."/>
            <person name="Oliver S.G."/>
            <person name="Turner G."/>
        </authorList>
    </citation>
    <scope>GENOME REANNOTATION</scope>
    <source>
        <strain>FGSC A4 / ATCC 38163 / CBS 112.46 / NRRL 194 / M139</strain>
    </source>
</reference>
<reference key="3">
    <citation type="journal article" date="2010" name="Appl. Environ. Microbiol.">
        <title>Characterization of the Aspergillus nidulans monodictyphenone gene cluster.</title>
        <authorList>
            <person name="Chiang Y.M."/>
            <person name="Szewczyk E."/>
            <person name="Davidson A.D."/>
            <person name="Entwistle R."/>
            <person name="Keller N.P."/>
            <person name="Wang C.C."/>
            <person name="Oakley B.R."/>
        </authorList>
    </citation>
    <scope>FUNCTION</scope>
    <scope>DISRUPTION PHENOTYPE</scope>
    <scope>PATHWAY</scope>
</reference>
<reference key="4">
    <citation type="journal article" date="2011" name="J. Am. Chem. Soc.">
        <title>Genome-based deletion analysis reveals the prenyl xanthone biosynthesis pathway in Aspergillus nidulans.</title>
        <authorList>
            <person name="Sanchez J.F."/>
            <person name="Entwistle R."/>
            <person name="Hung J.H."/>
            <person name="Yaegashi J."/>
            <person name="Jain S."/>
            <person name="Chiang Y.M."/>
            <person name="Wang C.C."/>
            <person name="Oakley B.R."/>
        </authorList>
    </citation>
    <scope>FUNCTION</scope>
    <scope>DISRUPTION PHENOTYPE</scope>
    <scope>PATHWAY</scope>
</reference>
<reference key="5">
    <citation type="journal article" date="2012" name="ChemBioChem">
        <title>Genetic and biosynthetic studies of the fungal prenylated xanthone shamixanthone and related metabolites in Aspergillus spp. revisited.</title>
        <authorList>
            <person name="Simpson T.J."/>
        </authorList>
    </citation>
    <scope>FUNCTION</scope>
    <scope>DISRUPTION PHENOTYPE</scope>
    <scope>PATHWAY</scope>
</reference>
<comment type="function">
    <text evidence="2 3 4 5">Scytalone dehydratase-like protein; part of the gene cluster that mediates the biosynthesis of monodictyphenone, a prenyl xanthone derivative (PubMed:20139316, PubMed:21351751, PubMed:22730213). The pathway begins with the synthesis of atrochrysone thioester by the polyketide synthase (PKS) mdpG (PubMed:20139316). The atrochrysone carboxyl ACP thioesterase mdpF then breaks the thioester bond and releases the atrochrysone carboxylic acid from mdpG (PubMed:20139316). The atrochrysone carboxylic acid is then converted to atrochrysone which is further transformed into emodin anthrone (PubMed:20139316). The next step is performed by the anthrone oxygenase mdpH that catalyzes the oxidation of emodinanthrone to emodin (By similarity). Emodin is further modified to yield monodictyphenone via several steps involving mdpB, mdpC mdpJ, mdpK and mdpL (PubMed:20139316, PubMed:21351751). These enzymes with xptA, xptB and xptC are also proposed to be involved in the synthesis of shamixanthone from emodin (PubMed:22730213). Especially, direct reduction of emodin by the short chain dehydrogenase mdpC followed by dehydration catalyzed by the scytalone dehydratase-like protein mdpB gives loss of oxygen and formation of chrysophanol intermediate in two simple steps (PubMed:22730213).</text>
</comment>
<comment type="pathway">
    <text evidence="3 4 5">Secondary metabolite biosynthesis.</text>
</comment>
<comment type="disruption phenotype">
    <text evidence="3 4 5">Impairs the production of monodictyphenone, but still enables the synthesis of intermediates until emodin.</text>
</comment>
<comment type="similarity">
    <text evidence="7">Belongs to the scytalone dehydratase family.</text>
</comment>
<comment type="sequence caution" evidence="7">
    <conflict type="erroneous gene model prediction">
        <sequence resource="EMBL-CDS" id="EAA66018"/>
    </conflict>
    <text>The predicted gene AN0145 has been split into 2 genes: ANIA_10021 and ANIA_10049.</text>
</comment>
<evidence type="ECO:0000250" key="1">
    <source>
        <dbReference type="UniProtKB" id="P56221"/>
    </source>
</evidence>
<evidence type="ECO:0000250" key="2">
    <source>
        <dbReference type="UniProtKB" id="Q0CCY3"/>
    </source>
</evidence>
<evidence type="ECO:0000269" key="3">
    <source>
    </source>
</evidence>
<evidence type="ECO:0000269" key="4">
    <source>
    </source>
</evidence>
<evidence type="ECO:0000269" key="5">
    <source>
    </source>
</evidence>
<evidence type="ECO:0000303" key="6">
    <source>
    </source>
</evidence>
<evidence type="ECO:0000305" key="7"/>
<protein>
    <recommendedName>
        <fullName evidence="6">Scytalone dehydratase-like protein mdpB</fullName>
        <ecNumber evidence="3">4.2.1.-</ecNumber>
    </recommendedName>
    <alternativeName>
        <fullName evidence="6">Monodictyphenone synthesis protein B</fullName>
    </alternativeName>
</protein>
<dbReference type="EC" id="4.2.1.-" evidence="3"/>
<dbReference type="EMBL" id="BN001308">
    <property type="protein sequence ID" value="CBF90107.1"/>
    <property type="molecule type" value="Genomic_DNA"/>
</dbReference>
<dbReference type="EMBL" id="AACD01000005">
    <property type="protein sequence ID" value="EAA66018.1"/>
    <property type="status" value="ALT_SEQ"/>
    <property type="molecule type" value="Genomic_DNA"/>
</dbReference>
<dbReference type="RefSeq" id="XP_657749.1">
    <property type="nucleotide sequence ID" value="XM_652657.1"/>
</dbReference>
<dbReference type="SMR" id="C8VQ71"/>
<dbReference type="STRING" id="227321.C8VQ71"/>
<dbReference type="EnsemblFungi" id="CBF90107">
    <property type="protein sequence ID" value="CBF90107"/>
    <property type="gene ID" value="ANIA_10049"/>
</dbReference>
<dbReference type="KEGG" id="ani:ANIA_10021"/>
<dbReference type="VEuPathDB" id="FungiDB:AN10049"/>
<dbReference type="eggNOG" id="ENOG502SNND">
    <property type="taxonomic scope" value="Eukaryota"/>
</dbReference>
<dbReference type="HOGENOM" id="CLU_101889_1_0_1"/>
<dbReference type="InParanoid" id="C8VQ71"/>
<dbReference type="OMA" id="SACYEWA"/>
<dbReference type="OrthoDB" id="5281072at2759"/>
<dbReference type="Proteomes" id="UP000000560">
    <property type="component" value="Chromosome VIII"/>
</dbReference>
<dbReference type="GO" id="GO:0016829">
    <property type="term" value="F:lyase activity"/>
    <property type="evidence" value="ECO:0007669"/>
    <property type="project" value="UniProtKB-KW"/>
</dbReference>
<dbReference type="GO" id="GO:1900815">
    <property type="term" value="P:monodictyphenone biosynthetic process"/>
    <property type="evidence" value="ECO:0000315"/>
    <property type="project" value="AspGD"/>
</dbReference>
<dbReference type="GO" id="GO:0044550">
    <property type="term" value="P:secondary metabolite biosynthetic process"/>
    <property type="evidence" value="ECO:0000315"/>
    <property type="project" value="AspGD"/>
</dbReference>
<dbReference type="GO" id="GO:2001307">
    <property type="term" value="P:xanthone-containing compound biosynthetic process"/>
    <property type="evidence" value="ECO:0000315"/>
    <property type="project" value="AspGD"/>
</dbReference>
<dbReference type="CDD" id="cd00531">
    <property type="entry name" value="NTF2_like"/>
    <property type="match status" value="1"/>
</dbReference>
<dbReference type="Gene3D" id="3.10.450.50">
    <property type="match status" value="1"/>
</dbReference>
<dbReference type="InterPro" id="IPR032710">
    <property type="entry name" value="NTF2-like_dom_sf"/>
</dbReference>
<dbReference type="InterPro" id="IPR049884">
    <property type="entry name" value="Scytalone_dh"/>
</dbReference>
<dbReference type="Pfam" id="PF02982">
    <property type="entry name" value="Scytalone_dh"/>
    <property type="match status" value="1"/>
</dbReference>
<dbReference type="SUPFAM" id="SSF54427">
    <property type="entry name" value="NTF2-like"/>
    <property type="match status" value="1"/>
</dbReference>
<keyword id="KW-0456">Lyase</keyword>
<keyword id="KW-1185">Reference proteome</keyword>
<name>MDPB_EMENI</name>
<organism>
    <name type="scientific">Emericella nidulans (strain FGSC A4 / ATCC 38163 / CBS 112.46 / NRRL 194 / M139)</name>
    <name type="common">Aspergillus nidulans</name>
    <dbReference type="NCBI Taxonomy" id="227321"/>
    <lineage>
        <taxon>Eukaryota</taxon>
        <taxon>Fungi</taxon>
        <taxon>Dikarya</taxon>
        <taxon>Ascomycota</taxon>
        <taxon>Pezizomycotina</taxon>
        <taxon>Eurotiomycetes</taxon>
        <taxon>Eurotiomycetidae</taxon>
        <taxon>Eurotiales</taxon>
        <taxon>Aspergillaceae</taxon>
        <taxon>Aspergillus</taxon>
        <taxon>Aspergillus subgen. Nidulantes</taxon>
    </lineage>
</organism>
<feature type="chain" id="PRO_0000437107" description="Scytalone dehydratase-like protein mdpB">
    <location>
        <begin position="1"/>
        <end position="214"/>
    </location>
</feature>
<feature type="active site" evidence="1">
    <location>
        <position position="95"/>
    </location>
</feature>
<feature type="active site" evidence="1">
    <location>
        <position position="120"/>
    </location>
</feature>
<feature type="binding site" evidence="1">
    <location>
        <position position="40"/>
    </location>
    <ligand>
        <name>substrate</name>
    </ligand>
</feature>
<feature type="binding site" evidence="1">
    <location>
        <position position="60"/>
    </location>
    <ligand>
        <name>substrate</name>
    </ligand>
</feature>
<gene>
    <name evidence="6" type="primary">mdpB</name>
    <name type="ORF">ANIA_10049</name>
</gene>
<proteinExistence type="inferred from homology"/>